<comment type="function">
    <text evidence="1">May help in the organization of the PsaE and PsaF subunits.</text>
</comment>
<comment type="subcellular location">
    <subcellularLocation>
        <location evidence="1">Cellular thylakoid membrane</location>
        <topology evidence="1">Single-pass membrane protein</topology>
    </subcellularLocation>
</comment>
<comment type="similarity">
    <text evidence="1">Belongs to the PsaJ family.</text>
</comment>
<protein>
    <recommendedName>
        <fullName evidence="1">Photosystem I reaction center subunit IX</fullName>
    </recommendedName>
</protein>
<proteinExistence type="inferred from homology"/>
<reference key="1">
    <citation type="journal article" date="2007" name="PLoS Genet.">
        <title>Patterns and implications of gene gain and loss in the evolution of Prochlorococcus.</title>
        <authorList>
            <person name="Kettler G.C."/>
            <person name="Martiny A.C."/>
            <person name="Huang K."/>
            <person name="Zucker J."/>
            <person name="Coleman M.L."/>
            <person name="Rodrigue S."/>
            <person name="Chen F."/>
            <person name="Lapidus A."/>
            <person name="Ferriera S."/>
            <person name="Johnson J."/>
            <person name="Steglich C."/>
            <person name="Church G.M."/>
            <person name="Richardson P."/>
            <person name="Chisholm S.W."/>
        </authorList>
    </citation>
    <scope>NUCLEOTIDE SEQUENCE [LARGE SCALE GENOMIC DNA]</scope>
    <source>
        <strain>MIT 9301</strain>
    </source>
</reference>
<sequence length="44" mass="5053">MFKILNTKFVRSAPVVAAIWLSLTAGIIIEFNRFFPDLLFHPMS</sequence>
<feature type="chain" id="PRO_1000050917" description="Photosystem I reaction center subunit IX">
    <location>
        <begin position="1"/>
        <end position="44"/>
    </location>
</feature>
<feature type="transmembrane region" description="Helical" evidence="1">
    <location>
        <begin position="9"/>
        <end position="29"/>
    </location>
</feature>
<dbReference type="EMBL" id="CP000576">
    <property type="protein sequence ID" value="ABO17116.1"/>
    <property type="molecule type" value="Genomic_DNA"/>
</dbReference>
<dbReference type="RefSeq" id="WP_011862490.1">
    <property type="nucleotide sequence ID" value="NC_009091.1"/>
</dbReference>
<dbReference type="SMR" id="A3PBJ1"/>
<dbReference type="STRING" id="167546.P9301_04931"/>
<dbReference type="KEGG" id="pmg:P9301_04931"/>
<dbReference type="HOGENOM" id="CLU_212133_1_1_3"/>
<dbReference type="OrthoDB" id="532702at2"/>
<dbReference type="Proteomes" id="UP000001430">
    <property type="component" value="Chromosome"/>
</dbReference>
<dbReference type="GO" id="GO:0009522">
    <property type="term" value="C:photosystem I"/>
    <property type="evidence" value="ECO:0007669"/>
    <property type="project" value="UniProtKB-KW"/>
</dbReference>
<dbReference type="GO" id="GO:0031676">
    <property type="term" value="C:plasma membrane-derived thylakoid membrane"/>
    <property type="evidence" value="ECO:0007669"/>
    <property type="project" value="UniProtKB-SubCell"/>
</dbReference>
<dbReference type="GO" id="GO:0015979">
    <property type="term" value="P:photosynthesis"/>
    <property type="evidence" value="ECO:0007669"/>
    <property type="project" value="UniProtKB-UniRule"/>
</dbReference>
<dbReference type="Gene3D" id="1.20.5.510">
    <property type="entry name" value="Single helix bin"/>
    <property type="match status" value="1"/>
</dbReference>
<dbReference type="HAMAP" id="MF_00522">
    <property type="entry name" value="PSI_PsaJ"/>
    <property type="match status" value="1"/>
</dbReference>
<dbReference type="InterPro" id="IPR002615">
    <property type="entry name" value="PSI_PsaJ"/>
</dbReference>
<dbReference type="InterPro" id="IPR036062">
    <property type="entry name" value="PSI_PsaJ_sf"/>
</dbReference>
<dbReference type="NCBIfam" id="NF002743">
    <property type="entry name" value="PRK02733.1"/>
    <property type="match status" value="1"/>
</dbReference>
<dbReference type="PANTHER" id="PTHR36082">
    <property type="match status" value="1"/>
</dbReference>
<dbReference type="PANTHER" id="PTHR36082:SF2">
    <property type="entry name" value="PHOTOSYSTEM I REACTION CENTER SUBUNIT IX"/>
    <property type="match status" value="1"/>
</dbReference>
<dbReference type="Pfam" id="PF01701">
    <property type="entry name" value="PSI_PsaJ"/>
    <property type="match status" value="1"/>
</dbReference>
<dbReference type="SUPFAM" id="SSF81544">
    <property type="entry name" value="Subunit IX of photosystem I reaction centre, PsaJ"/>
    <property type="match status" value="1"/>
</dbReference>
<name>PSAJ_PROM0</name>
<accession>A3PBJ1</accession>
<evidence type="ECO:0000255" key="1">
    <source>
        <dbReference type="HAMAP-Rule" id="MF_00522"/>
    </source>
</evidence>
<organism>
    <name type="scientific">Prochlorococcus marinus (strain MIT 9301)</name>
    <dbReference type="NCBI Taxonomy" id="167546"/>
    <lineage>
        <taxon>Bacteria</taxon>
        <taxon>Bacillati</taxon>
        <taxon>Cyanobacteriota</taxon>
        <taxon>Cyanophyceae</taxon>
        <taxon>Synechococcales</taxon>
        <taxon>Prochlorococcaceae</taxon>
        <taxon>Prochlorococcus</taxon>
    </lineage>
</organism>
<keyword id="KW-0472">Membrane</keyword>
<keyword id="KW-0602">Photosynthesis</keyword>
<keyword id="KW-0603">Photosystem I</keyword>
<keyword id="KW-1185">Reference proteome</keyword>
<keyword id="KW-0793">Thylakoid</keyword>
<keyword id="KW-0812">Transmembrane</keyword>
<keyword id="KW-1133">Transmembrane helix</keyword>
<gene>
    <name evidence="1" type="primary">psaJ</name>
    <name type="ordered locus">P9301_04931</name>
</gene>